<protein>
    <recommendedName>
        <fullName evidence="1">Lipid-A-disaccharide synthase</fullName>
        <ecNumber evidence="1">2.4.1.182</ecNumber>
    </recommendedName>
</protein>
<sequence>MSLRIGMVAGEPSGDLLAGRIIAGLQARAPGVHCAGIGGPQMAARGFEAWHPMHALTVFGYIDAFKRIPSLLSTYGDVKRRLLAEPPSVFVGIDAPDFNLRLEHQLRQAGTPTVHFVGPSIWAWRYERINKIRAAVSHMLVLFPFEEALYRKEGIPVTYVGHPLAGVIPMQPDRAAARARLGIDADARVLAILPGSRSSEIRLLAPRFLQAAAELVRRDPRLQCVVPMVNPQRRAEFEAIATQHPVPGLRCVTAAEGQGETPVAWSVMEASNAVLVASGTATLETALYKRPMVISYVLSPWMRRIMAWKSGQQRPYLPWVGLPNVLLRDFAVPELLQDEATPAALAEATWQALTDEAGAARIEARFTALHQDLLRDTPALAAQAILEVADGAA</sequence>
<gene>
    <name evidence="1" type="primary">lpxB</name>
    <name type="synonym">pgsB</name>
    <name type="ordered locus">BP1432</name>
</gene>
<accession>Q7VYB7</accession>
<organism>
    <name type="scientific">Bordetella pertussis (strain Tohama I / ATCC BAA-589 / NCTC 13251)</name>
    <dbReference type="NCBI Taxonomy" id="257313"/>
    <lineage>
        <taxon>Bacteria</taxon>
        <taxon>Pseudomonadati</taxon>
        <taxon>Pseudomonadota</taxon>
        <taxon>Betaproteobacteria</taxon>
        <taxon>Burkholderiales</taxon>
        <taxon>Alcaligenaceae</taxon>
        <taxon>Bordetella</taxon>
    </lineage>
</organism>
<evidence type="ECO:0000255" key="1">
    <source>
        <dbReference type="HAMAP-Rule" id="MF_00392"/>
    </source>
</evidence>
<comment type="function">
    <text evidence="1">Condensation of UDP-2,3-diacylglucosamine and 2,3-diacylglucosamine-1-phosphate to form lipid A disaccharide, a precursor of lipid A, a phosphorylated glycolipid that anchors the lipopolysaccharide to the outer membrane of the cell.</text>
</comment>
<comment type="catalytic activity">
    <reaction evidence="1">
        <text>a lipid X + a UDP-2-N,3-O-bis[(3R)-3-hydroxyacyl]-alpha-D-glucosamine = a lipid A disaccharide + UDP + H(+)</text>
        <dbReference type="Rhea" id="RHEA:67828"/>
        <dbReference type="ChEBI" id="CHEBI:15378"/>
        <dbReference type="ChEBI" id="CHEBI:58223"/>
        <dbReference type="ChEBI" id="CHEBI:137748"/>
        <dbReference type="ChEBI" id="CHEBI:176338"/>
        <dbReference type="ChEBI" id="CHEBI:176343"/>
        <dbReference type="EC" id="2.4.1.182"/>
    </reaction>
</comment>
<comment type="pathway">
    <text evidence="1">Bacterial outer membrane biogenesis; LPS lipid A biosynthesis.</text>
</comment>
<comment type="similarity">
    <text evidence="1">Belongs to the LpxB family.</text>
</comment>
<reference key="1">
    <citation type="journal article" date="2003" name="Nat. Genet.">
        <title>Comparative analysis of the genome sequences of Bordetella pertussis, Bordetella parapertussis and Bordetella bronchiseptica.</title>
        <authorList>
            <person name="Parkhill J."/>
            <person name="Sebaihia M."/>
            <person name="Preston A."/>
            <person name="Murphy L.D."/>
            <person name="Thomson N.R."/>
            <person name="Harris D.E."/>
            <person name="Holden M.T.G."/>
            <person name="Churcher C.M."/>
            <person name="Bentley S.D."/>
            <person name="Mungall K.L."/>
            <person name="Cerdeno-Tarraga A.-M."/>
            <person name="Temple L."/>
            <person name="James K.D."/>
            <person name="Harris B."/>
            <person name="Quail M.A."/>
            <person name="Achtman M."/>
            <person name="Atkin R."/>
            <person name="Baker S."/>
            <person name="Basham D."/>
            <person name="Bason N."/>
            <person name="Cherevach I."/>
            <person name="Chillingworth T."/>
            <person name="Collins M."/>
            <person name="Cronin A."/>
            <person name="Davis P."/>
            <person name="Doggett J."/>
            <person name="Feltwell T."/>
            <person name="Goble A."/>
            <person name="Hamlin N."/>
            <person name="Hauser H."/>
            <person name="Holroyd S."/>
            <person name="Jagels K."/>
            <person name="Leather S."/>
            <person name="Moule S."/>
            <person name="Norberczak H."/>
            <person name="O'Neil S."/>
            <person name="Ormond D."/>
            <person name="Price C."/>
            <person name="Rabbinowitsch E."/>
            <person name="Rutter S."/>
            <person name="Sanders M."/>
            <person name="Saunders D."/>
            <person name="Seeger K."/>
            <person name="Sharp S."/>
            <person name="Simmonds M."/>
            <person name="Skelton J."/>
            <person name="Squares R."/>
            <person name="Squares S."/>
            <person name="Stevens K."/>
            <person name="Unwin L."/>
            <person name="Whitehead S."/>
            <person name="Barrell B.G."/>
            <person name="Maskell D.J."/>
        </authorList>
    </citation>
    <scope>NUCLEOTIDE SEQUENCE [LARGE SCALE GENOMIC DNA]</scope>
    <source>
        <strain>Tohama I / ATCC BAA-589 / NCTC 13251</strain>
    </source>
</reference>
<keyword id="KW-0328">Glycosyltransferase</keyword>
<keyword id="KW-0441">Lipid A biosynthesis</keyword>
<keyword id="KW-0444">Lipid biosynthesis</keyword>
<keyword id="KW-0443">Lipid metabolism</keyword>
<keyword id="KW-1185">Reference proteome</keyword>
<keyword id="KW-0808">Transferase</keyword>
<name>LPXB_BORPE</name>
<dbReference type="EC" id="2.4.1.182" evidence="1"/>
<dbReference type="EMBL" id="BX640415">
    <property type="protein sequence ID" value="CAE41722.1"/>
    <property type="molecule type" value="Genomic_DNA"/>
</dbReference>
<dbReference type="RefSeq" id="NP_880174.1">
    <property type="nucleotide sequence ID" value="NC_002929.2"/>
</dbReference>
<dbReference type="RefSeq" id="WP_010930356.1">
    <property type="nucleotide sequence ID" value="NZ_CP039022.1"/>
</dbReference>
<dbReference type="SMR" id="Q7VYB7"/>
<dbReference type="STRING" id="257313.BP1432"/>
<dbReference type="CAZy" id="GT19">
    <property type="family name" value="Glycosyltransferase Family 19"/>
</dbReference>
<dbReference type="PaxDb" id="257313-BP1432"/>
<dbReference type="GeneID" id="69601343"/>
<dbReference type="KEGG" id="bpe:BP1432"/>
<dbReference type="PATRIC" id="fig|257313.5.peg.1535"/>
<dbReference type="eggNOG" id="COG0763">
    <property type="taxonomic scope" value="Bacteria"/>
</dbReference>
<dbReference type="HOGENOM" id="CLU_036577_3_0_4"/>
<dbReference type="UniPathway" id="UPA00973"/>
<dbReference type="Proteomes" id="UP000002676">
    <property type="component" value="Chromosome"/>
</dbReference>
<dbReference type="GO" id="GO:0016020">
    <property type="term" value="C:membrane"/>
    <property type="evidence" value="ECO:0007669"/>
    <property type="project" value="GOC"/>
</dbReference>
<dbReference type="GO" id="GO:0008915">
    <property type="term" value="F:lipid-A-disaccharide synthase activity"/>
    <property type="evidence" value="ECO:0007669"/>
    <property type="project" value="UniProtKB-UniRule"/>
</dbReference>
<dbReference type="GO" id="GO:0005543">
    <property type="term" value="F:phospholipid binding"/>
    <property type="evidence" value="ECO:0007669"/>
    <property type="project" value="TreeGrafter"/>
</dbReference>
<dbReference type="GO" id="GO:0009245">
    <property type="term" value="P:lipid A biosynthetic process"/>
    <property type="evidence" value="ECO:0007669"/>
    <property type="project" value="UniProtKB-UniRule"/>
</dbReference>
<dbReference type="HAMAP" id="MF_00392">
    <property type="entry name" value="LpxB"/>
    <property type="match status" value="1"/>
</dbReference>
<dbReference type="InterPro" id="IPR003835">
    <property type="entry name" value="Glyco_trans_19"/>
</dbReference>
<dbReference type="NCBIfam" id="TIGR00215">
    <property type="entry name" value="lpxB"/>
    <property type="match status" value="1"/>
</dbReference>
<dbReference type="PANTHER" id="PTHR30372">
    <property type="entry name" value="LIPID-A-DISACCHARIDE SYNTHASE"/>
    <property type="match status" value="1"/>
</dbReference>
<dbReference type="PANTHER" id="PTHR30372:SF4">
    <property type="entry name" value="LIPID-A-DISACCHARIDE SYNTHASE, MITOCHONDRIAL-RELATED"/>
    <property type="match status" value="1"/>
</dbReference>
<dbReference type="Pfam" id="PF02684">
    <property type="entry name" value="LpxB"/>
    <property type="match status" value="1"/>
</dbReference>
<dbReference type="SUPFAM" id="SSF53756">
    <property type="entry name" value="UDP-Glycosyltransferase/glycogen phosphorylase"/>
    <property type="match status" value="1"/>
</dbReference>
<feature type="chain" id="PRO_0000190154" description="Lipid-A-disaccharide synthase">
    <location>
        <begin position="1"/>
        <end position="393"/>
    </location>
</feature>
<proteinExistence type="inferred from homology"/>